<accession>B0SMW9</accession>
<evidence type="ECO:0000255" key="1">
    <source>
        <dbReference type="HAMAP-Rule" id="MF_00501"/>
    </source>
</evidence>
<evidence type="ECO:0000305" key="2"/>
<reference key="1">
    <citation type="journal article" date="2008" name="PLoS ONE">
        <title>Genome sequence of the saprophyte Leptospira biflexa provides insights into the evolution of Leptospira and the pathogenesis of leptospirosis.</title>
        <authorList>
            <person name="Picardeau M."/>
            <person name="Bulach D.M."/>
            <person name="Bouchier C."/>
            <person name="Zuerner R.L."/>
            <person name="Zidane N."/>
            <person name="Wilson P.J."/>
            <person name="Creno S."/>
            <person name="Kuczek E.S."/>
            <person name="Bommezzadri S."/>
            <person name="Davis J.C."/>
            <person name="McGrath A."/>
            <person name="Johnson M.J."/>
            <person name="Boursaux-Eude C."/>
            <person name="Seemann T."/>
            <person name="Rouy Z."/>
            <person name="Coppel R.L."/>
            <person name="Rood J.I."/>
            <person name="Lajus A."/>
            <person name="Davies J.K."/>
            <person name="Medigue C."/>
            <person name="Adler B."/>
        </authorList>
    </citation>
    <scope>NUCLEOTIDE SEQUENCE [LARGE SCALE GENOMIC DNA]</scope>
    <source>
        <strain>Patoc 1 / ATCC 23582 / Paris</strain>
    </source>
</reference>
<gene>
    <name evidence="1" type="primary">rpmE</name>
    <name type="ordered locus">LEPBI_I1033</name>
</gene>
<name>RL31_LEPBP</name>
<sequence length="66" mass="7372">MKTDIHPKYVAAKIKCACGTVIETRSTSGDISVEICSNCHPFFTGKSKLVDTTGRVDKFKKKYKMK</sequence>
<feature type="chain" id="PRO_1000126653" description="Large ribosomal subunit protein bL31">
    <location>
        <begin position="1"/>
        <end position="66"/>
    </location>
</feature>
<feature type="binding site" evidence="1">
    <location>
        <position position="16"/>
    </location>
    <ligand>
        <name>Zn(2+)</name>
        <dbReference type="ChEBI" id="CHEBI:29105"/>
    </ligand>
</feature>
<feature type="binding site" evidence="1">
    <location>
        <position position="18"/>
    </location>
    <ligand>
        <name>Zn(2+)</name>
        <dbReference type="ChEBI" id="CHEBI:29105"/>
    </ligand>
</feature>
<feature type="binding site" evidence="1">
    <location>
        <position position="36"/>
    </location>
    <ligand>
        <name>Zn(2+)</name>
        <dbReference type="ChEBI" id="CHEBI:29105"/>
    </ligand>
</feature>
<feature type="binding site" evidence="1">
    <location>
        <position position="39"/>
    </location>
    <ligand>
        <name>Zn(2+)</name>
        <dbReference type="ChEBI" id="CHEBI:29105"/>
    </ligand>
</feature>
<keyword id="KW-0479">Metal-binding</keyword>
<keyword id="KW-1185">Reference proteome</keyword>
<keyword id="KW-0687">Ribonucleoprotein</keyword>
<keyword id="KW-0689">Ribosomal protein</keyword>
<keyword id="KW-0694">RNA-binding</keyword>
<keyword id="KW-0699">rRNA-binding</keyword>
<keyword id="KW-0862">Zinc</keyword>
<protein>
    <recommendedName>
        <fullName evidence="1">Large ribosomal subunit protein bL31</fullName>
    </recommendedName>
    <alternativeName>
        <fullName evidence="2">50S ribosomal protein L31</fullName>
    </alternativeName>
</protein>
<dbReference type="EMBL" id="CP000786">
    <property type="protein sequence ID" value="ABZ97156.1"/>
    <property type="molecule type" value="Genomic_DNA"/>
</dbReference>
<dbReference type="RefSeq" id="WP_012388038.1">
    <property type="nucleotide sequence ID" value="NC_010602.1"/>
</dbReference>
<dbReference type="SMR" id="B0SMW9"/>
<dbReference type="STRING" id="456481.LEPBI_I1033"/>
<dbReference type="KEGG" id="lbi:LEPBI_I1033"/>
<dbReference type="HOGENOM" id="CLU_114306_4_3_12"/>
<dbReference type="OrthoDB" id="9803251at2"/>
<dbReference type="BioCyc" id="LBIF456481:LEPBI_RS05070-MONOMER"/>
<dbReference type="Proteomes" id="UP000001847">
    <property type="component" value="Chromosome I"/>
</dbReference>
<dbReference type="GO" id="GO:1990904">
    <property type="term" value="C:ribonucleoprotein complex"/>
    <property type="evidence" value="ECO:0007669"/>
    <property type="project" value="UniProtKB-KW"/>
</dbReference>
<dbReference type="GO" id="GO:0005840">
    <property type="term" value="C:ribosome"/>
    <property type="evidence" value="ECO:0007669"/>
    <property type="project" value="UniProtKB-KW"/>
</dbReference>
<dbReference type="GO" id="GO:0046872">
    <property type="term" value="F:metal ion binding"/>
    <property type="evidence" value="ECO:0007669"/>
    <property type="project" value="UniProtKB-KW"/>
</dbReference>
<dbReference type="GO" id="GO:0019843">
    <property type="term" value="F:rRNA binding"/>
    <property type="evidence" value="ECO:0007669"/>
    <property type="project" value="UniProtKB-KW"/>
</dbReference>
<dbReference type="GO" id="GO:0003735">
    <property type="term" value="F:structural constituent of ribosome"/>
    <property type="evidence" value="ECO:0007669"/>
    <property type="project" value="InterPro"/>
</dbReference>
<dbReference type="GO" id="GO:0006412">
    <property type="term" value="P:translation"/>
    <property type="evidence" value="ECO:0007669"/>
    <property type="project" value="UniProtKB-UniRule"/>
</dbReference>
<dbReference type="Gene3D" id="4.10.830.30">
    <property type="entry name" value="Ribosomal protein L31"/>
    <property type="match status" value="1"/>
</dbReference>
<dbReference type="HAMAP" id="MF_00501">
    <property type="entry name" value="Ribosomal_bL31_1"/>
    <property type="match status" value="1"/>
</dbReference>
<dbReference type="InterPro" id="IPR034704">
    <property type="entry name" value="Ribosomal_bL28/bL31-like_sf"/>
</dbReference>
<dbReference type="InterPro" id="IPR002150">
    <property type="entry name" value="Ribosomal_bL31"/>
</dbReference>
<dbReference type="InterPro" id="IPR027491">
    <property type="entry name" value="Ribosomal_bL31_A"/>
</dbReference>
<dbReference type="InterPro" id="IPR042105">
    <property type="entry name" value="Ribosomal_bL31_sf"/>
</dbReference>
<dbReference type="NCBIfam" id="TIGR00105">
    <property type="entry name" value="L31"/>
    <property type="match status" value="1"/>
</dbReference>
<dbReference type="NCBIfam" id="NF000612">
    <property type="entry name" value="PRK00019.1"/>
    <property type="match status" value="1"/>
</dbReference>
<dbReference type="NCBIfam" id="NF001809">
    <property type="entry name" value="PRK00528.1"/>
    <property type="match status" value="1"/>
</dbReference>
<dbReference type="PANTHER" id="PTHR33280">
    <property type="entry name" value="50S RIBOSOMAL PROTEIN L31, CHLOROPLASTIC"/>
    <property type="match status" value="1"/>
</dbReference>
<dbReference type="PANTHER" id="PTHR33280:SF1">
    <property type="entry name" value="LARGE RIBOSOMAL SUBUNIT PROTEIN BL31C"/>
    <property type="match status" value="1"/>
</dbReference>
<dbReference type="Pfam" id="PF01197">
    <property type="entry name" value="Ribosomal_L31"/>
    <property type="match status" value="1"/>
</dbReference>
<dbReference type="PRINTS" id="PR01249">
    <property type="entry name" value="RIBOSOMALL31"/>
</dbReference>
<dbReference type="SUPFAM" id="SSF143800">
    <property type="entry name" value="L28p-like"/>
    <property type="match status" value="1"/>
</dbReference>
<dbReference type="PROSITE" id="PS01143">
    <property type="entry name" value="RIBOSOMAL_L31"/>
    <property type="match status" value="1"/>
</dbReference>
<organism>
    <name type="scientific">Leptospira biflexa serovar Patoc (strain Patoc 1 / ATCC 23582 / Paris)</name>
    <dbReference type="NCBI Taxonomy" id="456481"/>
    <lineage>
        <taxon>Bacteria</taxon>
        <taxon>Pseudomonadati</taxon>
        <taxon>Spirochaetota</taxon>
        <taxon>Spirochaetia</taxon>
        <taxon>Leptospirales</taxon>
        <taxon>Leptospiraceae</taxon>
        <taxon>Leptospira</taxon>
    </lineage>
</organism>
<proteinExistence type="inferred from homology"/>
<comment type="function">
    <text evidence="1">Binds the 23S rRNA.</text>
</comment>
<comment type="cofactor">
    <cofactor evidence="1">
        <name>Zn(2+)</name>
        <dbReference type="ChEBI" id="CHEBI:29105"/>
    </cofactor>
    <text evidence="1">Binds 1 zinc ion per subunit.</text>
</comment>
<comment type="subunit">
    <text evidence="1">Part of the 50S ribosomal subunit.</text>
</comment>
<comment type="similarity">
    <text evidence="1">Belongs to the bacterial ribosomal protein bL31 family. Type A subfamily.</text>
</comment>